<sequence length="102" mass="11538">MEPVDPRLEPWKHPGSQPKTACNNCYCKKCCYHCQVCFLTKGLGISYGRKKRRQRRGPPQGSQTHQVSLSKQPTSQPRGDPTGPKESKEKVERETETDPAVQ</sequence>
<dbReference type="EMBL" id="M17451">
    <property type="protein sequence ID" value="AAA45050.1"/>
    <property type="molecule type" value="Genomic_RNA"/>
</dbReference>
<dbReference type="SMR" id="P05908"/>
<dbReference type="Proteomes" id="UP000007699">
    <property type="component" value="Segment"/>
</dbReference>
<dbReference type="GO" id="GO:0005576">
    <property type="term" value="C:extracellular region"/>
    <property type="evidence" value="ECO:0007669"/>
    <property type="project" value="UniProtKB-SubCell"/>
</dbReference>
<dbReference type="GO" id="GO:0030430">
    <property type="term" value="C:host cell cytoplasm"/>
    <property type="evidence" value="ECO:0007669"/>
    <property type="project" value="UniProtKB-SubCell"/>
</dbReference>
<dbReference type="GO" id="GO:0044196">
    <property type="term" value="C:host cell nucleolus"/>
    <property type="evidence" value="ECO:0007669"/>
    <property type="project" value="UniProtKB-SubCell"/>
</dbReference>
<dbReference type="GO" id="GO:0042805">
    <property type="term" value="F:actinin binding"/>
    <property type="evidence" value="ECO:0007669"/>
    <property type="project" value="UniProtKB-UniRule"/>
</dbReference>
<dbReference type="GO" id="GO:0030332">
    <property type="term" value="F:cyclin binding"/>
    <property type="evidence" value="ECO:0007669"/>
    <property type="project" value="UniProtKB-UniRule"/>
</dbReference>
<dbReference type="GO" id="GO:0046872">
    <property type="term" value="F:metal ion binding"/>
    <property type="evidence" value="ECO:0007669"/>
    <property type="project" value="UniProtKB-UniRule"/>
</dbReference>
<dbReference type="GO" id="GO:0019904">
    <property type="term" value="F:protein domain specific binding"/>
    <property type="evidence" value="ECO:0007669"/>
    <property type="project" value="UniProtKB-UniRule"/>
</dbReference>
<dbReference type="GO" id="GO:0004865">
    <property type="term" value="F:protein serine/threonine phosphatase inhibitor activity"/>
    <property type="evidence" value="ECO:0007669"/>
    <property type="project" value="UniProtKB-KW"/>
</dbReference>
<dbReference type="GO" id="GO:0001070">
    <property type="term" value="F:RNA-binding transcription regulator activity"/>
    <property type="evidence" value="ECO:0007669"/>
    <property type="project" value="UniProtKB-UniRule"/>
</dbReference>
<dbReference type="GO" id="GO:1990970">
    <property type="term" value="F:trans-activation response element binding"/>
    <property type="evidence" value="ECO:0007669"/>
    <property type="project" value="UniProtKB-UniRule"/>
</dbReference>
<dbReference type="GO" id="GO:0006351">
    <property type="term" value="P:DNA-templated transcription"/>
    <property type="evidence" value="ECO:0007669"/>
    <property type="project" value="UniProtKB-UniRule"/>
</dbReference>
<dbReference type="GO" id="GO:0032968">
    <property type="term" value="P:positive regulation of transcription elongation by RNA polymerase II"/>
    <property type="evidence" value="ECO:0007669"/>
    <property type="project" value="UniProtKB-UniRule"/>
</dbReference>
<dbReference type="GO" id="GO:0050434">
    <property type="term" value="P:positive regulation of viral transcription"/>
    <property type="evidence" value="ECO:0007669"/>
    <property type="project" value="UniProtKB-UniRule"/>
</dbReference>
<dbReference type="GO" id="GO:0039525">
    <property type="term" value="P:symbiont-mediated perturbation of host chromatin organization"/>
    <property type="evidence" value="ECO:0007669"/>
    <property type="project" value="UniProtKB-UniRule"/>
</dbReference>
<dbReference type="GO" id="GO:0052170">
    <property type="term" value="P:symbiont-mediated suppression of host innate immune response"/>
    <property type="evidence" value="ECO:0007669"/>
    <property type="project" value="UniProtKB-KW"/>
</dbReference>
<dbReference type="GO" id="GO:0039606">
    <property type="term" value="P:symbiont-mediated suppression of host translation initiation"/>
    <property type="evidence" value="ECO:0007669"/>
    <property type="project" value="UniProtKB-KW"/>
</dbReference>
<dbReference type="GO" id="GO:0039502">
    <property type="term" value="P:symbiont-mediated suppression of host type I interferon-mediated signaling pathway"/>
    <property type="evidence" value="ECO:0007669"/>
    <property type="project" value="UniProtKB-UniRule"/>
</dbReference>
<dbReference type="Gene3D" id="4.10.20.10">
    <property type="entry name" value="Tat domain"/>
    <property type="match status" value="1"/>
</dbReference>
<dbReference type="HAMAP" id="MF_04079">
    <property type="entry name" value="HIV_TAT"/>
    <property type="match status" value="1"/>
</dbReference>
<dbReference type="InterPro" id="IPR001831">
    <property type="entry name" value="IV_Tat"/>
</dbReference>
<dbReference type="InterPro" id="IPR036963">
    <property type="entry name" value="Tat_dom_sf"/>
</dbReference>
<dbReference type="Pfam" id="PF00539">
    <property type="entry name" value="Tat"/>
    <property type="match status" value="1"/>
</dbReference>
<dbReference type="PRINTS" id="PR00055">
    <property type="entry name" value="HIVTATDOMAIN"/>
</dbReference>
<organism>
    <name type="scientific">Human immunodeficiency virus type 1 group M subtype B (isolate RF/HAT3)</name>
    <name type="common">HIV-1</name>
    <dbReference type="NCBI Taxonomy" id="11701"/>
    <lineage>
        <taxon>Viruses</taxon>
        <taxon>Riboviria</taxon>
        <taxon>Pararnavirae</taxon>
        <taxon>Artverviricota</taxon>
        <taxon>Revtraviricetes</taxon>
        <taxon>Ortervirales</taxon>
        <taxon>Retroviridae</taxon>
        <taxon>Orthoretrovirinae</taxon>
        <taxon>Lentivirus</taxon>
        <taxon>Human immunodeficiency virus type 1</taxon>
    </lineage>
</organism>
<evidence type="ECO:0000255" key="1">
    <source>
        <dbReference type="HAMAP-Rule" id="MF_04079"/>
    </source>
</evidence>
<evidence type="ECO:0000256" key="2">
    <source>
        <dbReference type="SAM" id="MobiDB-lite"/>
    </source>
</evidence>
<evidence type="ECO:0000305" key="3"/>
<organismHost>
    <name type="scientific">Homo sapiens</name>
    <name type="common">Human</name>
    <dbReference type="NCBI Taxonomy" id="9606"/>
</organismHost>
<reference key="1">
    <citation type="journal article" date="1986" name="Cell">
        <title>Identification and characterization of conserved and variable regions in the envelope gene of HTLV-III/LAV, the retrovirus of AIDS.</title>
        <authorList>
            <person name="Starcich B.R."/>
            <person name="Hahn B.H."/>
            <person name="Shaw G.M."/>
            <person name="McNeely P.D."/>
            <person name="Modrow S."/>
            <person name="Wolf H."/>
            <person name="Parks E.S."/>
            <person name="Parks W.P."/>
            <person name="Josephs S.F."/>
            <person name="Gallo R.C."/>
            <person name="Wong-Staal F."/>
        </authorList>
    </citation>
    <scope>NUCLEOTIDE SEQUENCE [GENOMIC RNA]</scope>
</reference>
<reference key="2">
    <citation type="journal article" date="2005" name="Microbes Infect.">
        <title>Decoding Tat: the biology of HIV Tat posttranslational modifications.</title>
        <authorList>
            <person name="Hetzer C."/>
            <person name="Dormeyer W."/>
            <person name="Schnolzer M."/>
            <person name="Ott M."/>
        </authorList>
    </citation>
    <scope>REVIEW</scope>
    <scope>ALTERNATIVE SPLICING</scope>
</reference>
<reference key="3">
    <citation type="journal article" date="2006" name="Front. Biosci.">
        <title>The multiple functions of HIV-1 Tat: proliferation versus apoptosis.</title>
        <authorList>
            <person name="Peruzzi F."/>
        </authorList>
    </citation>
    <scope>REVIEW</scope>
</reference>
<reference key="4">
    <citation type="journal article" date="2006" name="Microbes Infect.">
        <title>HIV tat and neurotoxicity.</title>
        <authorList>
            <person name="King J.E."/>
            <person name="Eugenin E.A."/>
            <person name="Buckner C.M."/>
            <person name="Berman J.W."/>
        </authorList>
    </citation>
    <scope>REVIEW</scope>
</reference>
<proteinExistence type="inferred from homology"/>
<accession>P05908</accession>
<comment type="function">
    <text evidence="1">Transcriptional activator that increases RNA Pol II processivity, thereby increasing the level of full-length viral transcripts. Recognizes a hairpin structure at the 5'-LTR of the nascent viral mRNAs referred to as the transactivation responsive RNA element (TAR) and recruits the cyclin T1-CDK9 complex (P-TEFb complex) that will in turn hyperphosphorylate the RNA polymerase II to allow efficient elongation. The CDK9 component of P-TEFb and other Tat-activated kinases hyperphosphorylate the C-terminus of RNA Pol II that becomes stabilized and much more processive. Other factors such as HTATSF1/Tat-SF1, SUPT5H/SPT5, and HTATIP2 are also important for Tat's function. Besides its effect on RNA Pol II processivity, Tat induces chromatin remodeling of proviral genes by recruiting the histone acetyltransferases (HATs) CREBBP, EP300 and PCAF to the chromatin. This also contributes to the increase in proviral transcription rate, especially when the provirus integrates in transcriptionally silent region of the host genome. To ensure maximal activation of the LTR, Tat mediates nuclear translocation of NF-kappa-B by interacting with host RELA. Through its interaction with host TBP, Tat may also modulate transcription initiation. Tat can reactivate a latently infected cell by penetrating in it and transactivating its LTR promoter. In the cytoplasm, Tat is thought to act as a translational activator of HIV-1 mRNAs.</text>
</comment>
<comment type="function">
    <text evidence="1">Extracellular circulating Tat can be endocytosed by surrounding uninfected cells via the binding to several surface receptors such as CD26, CXCR4, heparan sulfate proteoglycans (HSPG) or LDLR. Neurons are rarely infected, but they internalize Tat via their LDLR. Through its interaction with nuclear HATs, Tat is potentially able to control the acetylation-dependent cellular gene expression. Modulates the expression of many cellular genes involved in cell survival, proliferation or in coding for cytokines or cytokine receptors. Tat plays a role in T-cell and neurons apoptosis. Tat induced neurotoxicity and apoptosis probably contribute to neuroAIDS. Circulating Tat also acts as a chemokine-like and/or growth factor-like molecule that binds to specific receptors on the surface of the cells, affecting many cellular pathways. In the vascular system, Tat binds to ITGAV/ITGB3 and ITGA5/ITGB1 integrins dimers at the surface of endothelial cells and competes with bFGF for heparin-binding sites, leading to an excess of soluble bFGF.</text>
</comment>
<comment type="subunit">
    <text evidence="1">Interacts with host CCNT1. Associates with the P-TEFb complex composed at least of Tat, P-TEFb (CDK9 and CCNT1), TAR RNA, RNA Pol II. Recruits the HATs CREBBP, TAF1/TFIID, EP300, PCAF and GCN5L2. Interacts with host KAT5/Tip60; this interaction targets the latter to degradation. Interacts with the host deacetylase SIRT1. Interacts with host capping enzyme RNGTT; this interaction stimulates RNGTT. Binds to host KDR, and to the host integrins ITGAV/ITGB3 and ITGA5/ITGB1. Interacts with host KPNB1/importin beta-1 without previous binding to KPNA1/importin alpha-1. Interacts with EIF2AK2. Interacts with host nucleosome assembly protein NAP1L1; this interaction may be required for the transport of Tat within the nucleus, since the two proteins interact at the nuclear rim. Interacts with host C1QBP/SF2P32; this interaction involves lysine-acetylated Tat. Interacts with the host chemokine receptors CCR2, CCR3 and CXCR4. Interacts with host DPP4/CD26; this interaction may trigger an anti-proliferative effect. Interacts with host LDLR. Interacts with the host extracellular matrix metalloproteinase MMP1. Interacts with host PRMT6; this interaction mediates Tat's methylation. Interacts with, and is ubiquitinated by MDM2/Hdm2. Interacts with host PSMC3 and HTATIP2. Interacts with STAB1; this interaction may overcome SATB1-mediated repression of IL2 and IL2RA (interleukin) in T cells by binding to the same domain than HDAC1. Interacts (when acetylated) with human CDK13, thereby increasing HIV-1 mRNA splicing and promoting the production of the doubly spliced HIV-1 protein Nef. Interacts with host TBP; this interaction modulates the activity of transcriptional pre-initiation complex. Interacts with host RELA. Interacts with host PLSCR1; this interaction negatively regulates Tat transactivation activity by altering its subcellular distribution.</text>
</comment>
<comment type="subcellular location">
    <subcellularLocation>
        <location evidence="1">Host nucleus</location>
        <location evidence="1">Host nucleolus</location>
    </subcellularLocation>
    <subcellularLocation>
        <location evidence="1">Host cytoplasm</location>
    </subcellularLocation>
    <subcellularLocation>
        <location evidence="1">Secreted</location>
    </subcellularLocation>
    <text evidence="1">Probably localizes to both nuclear and nucleolar compartments. Nuclear localization is mediated through the interaction of the nuclear localization signal with importin KPNB1. Secretion occurs through a Golgi-independent pathway. Tat is released from infected cells to the extracellular space where it remains associated to the cell membrane, or is secreted into the cerebrospinal fluid and sera. Extracellular Tat can be endocytosed by surrounding uninfected cells via binding to several receptors depending on the cell type.</text>
</comment>
<comment type="alternative products">
    <event type="alternative splicing"/>
    <isoform>
        <id>P05908-1</id>
        <name>Long</name>
        <sequence type="displayed"/>
    </isoform>
    <isoform>
        <id>P05908-2</id>
        <name>Short</name>
        <sequence type="described" ref="VSP_022422"/>
    </isoform>
</comment>
<comment type="domain">
    <text evidence="1">The cell attachment site mediates the interaction with ITGAV/ITGB3 and ITGA5/ITGB1 integrins, leading to vascular cell migration and invasion. This interaction also provides endothelial cells with the adhesion signal they require to grow in response to mitogens.</text>
</comment>
<comment type="domain">
    <text evidence="1">The Cys-rich region may bind 2 zinc ions. This region is involved in binding to KAT5.</text>
</comment>
<comment type="domain">
    <text evidence="1">The transactivation domain mediates the interaction with CCNT1, GCN5L2, and MDM2.</text>
</comment>
<comment type="domain">
    <text evidence="1">The Arg-rich RNA-binding region binds the TAR RNA. This region also mediates the nuclear localization through direct binding to KPNB1 and is involved in Tat's transfer across cell membranes (protein transduction). The same region is required for the interaction with EP300, PCAF, EIF2AK2 and KDR.</text>
</comment>
<comment type="PTM">
    <text evidence="1">Asymmetrical arginine methylation by host PRMT6 seems to diminish the transactivation capacity of Tat and affects the interaction with host CCNT1.</text>
</comment>
<comment type="PTM">
    <text evidence="1">Acetylation by EP300, CREBBP, GCN5L2/GCN5 and PCAF regulates the transactivation activity of Tat. EP300-mediated acetylation of Lys-50 promotes dissociation of Tat from the TAR RNA through the competitive binding to PCAF's bromodomain. In addition, the non-acetylated Tat's N-terminus can also interact with PCAF. PCAF-mediated acetylation of Lys-28 enhances Tat's binding to CCNT1. Lys-50 is deacetylated by SIRT1.</text>
</comment>
<comment type="PTM">
    <text evidence="1">Polyubiquitination by host MDM2 does not target Tat to degradation, but activates its transactivation function and fosters interaction with CCNT1 and TAR RNA.</text>
</comment>
<comment type="PTM">
    <text evidence="1">Phosphorylated by EIF2AK2 on serine and threonine residues adjacent to the basic region important for TAR RNA binding and function. Phosphorylation of Tat by EIF2AK2 is dependent on the prior activation of EIF2AK2 by dsRNA.</text>
</comment>
<comment type="miscellaneous">
    <text evidence="1">HIV-1 lineages are divided in three main groups, M (for Major), O (for Outlier), and N (for New, or Non-M, Non-O). The vast majority of strains found worldwide belong to the group M. Group O seems to be endemic to and largely confined to Cameroon and neighboring countries in West Central Africa, where these viruses represent a small minority of HIV-1 strains. The group N is represented by a limited number of isolates from Cameroonian persons. The group M is further subdivided in 9 clades or subtypes (A to D, F to H, J and K).</text>
</comment>
<comment type="miscellaneous">
    <molecule>Isoform Short</molecule>
    <text evidence="3">Expressed in the late stage of the infection cycle, when unspliced viral RNAs are exported to the cytoplasm by the viral Rev protein.</text>
</comment>
<comment type="similarity">
    <text evidence="1">Belongs to the lentiviruses Tat family.</text>
</comment>
<gene>
    <name evidence="1" type="primary">tat</name>
</gene>
<keyword id="KW-0007">Acetylation</keyword>
<keyword id="KW-0010">Activator</keyword>
<keyword id="KW-0014">AIDS</keyword>
<keyword id="KW-0025">Alternative splicing</keyword>
<keyword id="KW-0053">Apoptosis</keyword>
<keyword id="KW-1035">Host cytoplasm</keyword>
<keyword id="KW-1048">Host nucleus</keyword>
<keyword id="KW-0945">Host-virus interaction</keyword>
<keyword id="KW-1090">Inhibition of host innate immune response by virus</keyword>
<keyword id="KW-1114">Inhibition of host interferon signaling pathway by virus</keyword>
<keyword id="KW-0922">Interferon antiviral system evasion</keyword>
<keyword id="KW-1017">Isopeptide bond</keyword>
<keyword id="KW-0479">Metal-binding</keyword>
<keyword id="KW-0488">Methylation</keyword>
<keyword id="KW-1122">Modulation of host chromatin by virus</keyword>
<keyword id="KW-1126">Modulation of host PP1 activity by virus</keyword>
<keyword id="KW-0597">Phosphoprotein</keyword>
<keyword id="KW-1185">Reference proteome</keyword>
<keyword id="KW-0694">RNA-binding</keyword>
<keyword id="KW-0964">Secreted</keyword>
<keyword id="KW-0804">Transcription</keyword>
<keyword id="KW-0805">Transcription regulation</keyword>
<keyword id="KW-0832">Ubl conjugation</keyword>
<keyword id="KW-0899">Viral immunoevasion</keyword>
<keyword id="KW-0862">Zinc</keyword>
<name>TAT_HV1RH</name>
<feature type="chain" id="PRO_0000085360" description="Protein Tat">
    <location>
        <begin position="1"/>
        <end position="102"/>
    </location>
</feature>
<feature type="region of interest" description="Transactivation" evidence="1">
    <location>
        <begin position="1"/>
        <end position="48"/>
    </location>
</feature>
<feature type="region of interest" description="Interaction with human CREBBP" evidence="1">
    <location>
        <begin position="1"/>
        <end position="24"/>
    </location>
</feature>
<feature type="region of interest" description="Cysteine-rich" evidence="1">
    <location>
        <begin position="22"/>
        <end position="37"/>
    </location>
</feature>
<feature type="region of interest" description="Core" evidence="1">
    <location>
        <begin position="38"/>
        <end position="48"/>
    </location>
</feature>
<feature type="region of interest" description="Disordered" evidence="2">
    <location>
        <begin position="48"/>
        <end position="102"/>
    </location>
</feature>
<feature type="region of interest" description="Interaction with the host capping enzyme RNGTT" evidence="1">
    <location>
        <begin position="49"/>
        <end position="86"/>
    </location>
</feature>
<feature type="short sequence motif" description="Nuclear localization signal, RNA-binding (TAR), and protein transduction" evidence="1">
    <location>
        <begin position="49"/>
        <end position="57"/>
    </location>
</feature>
<feature type="short sequence motif" description="Cell attachment site" evidence="1">
    <location>
        <begin position="78"/>
        <end position="80"/>
    </location>
</feature>
<feature type="compositionally biased region" description="Polar residues" evidence="2">
    <location>
        <begin position="62"/>
        <end position="77"/>
    </location>
</feature>
<feature type="compositionally biased region" description="Basic and acidic residues" evidence="2">
    <location>
        <begin position="83"/>
        <end position="96"/>
    </location>
</feature>
<feature type="binding site" evidence="1">
    <location>
        <position position="22"/>
    </location>
    <ligand>
        <name>Zn(2+)</name>
        <dbReference type="ChEBI" id="CHEBI:29105"/>
        <label>1</label>
    </ligand>
</feature>
<feature type="binding site" evidence="1">
    <location>
        <position position="25"/>
    </location>
    <ligand>
        <name>Zn(2+)</name>
        <dbReference type="ChEBI" id="CHEBI:29105"/>
        <label>2</label>
    </ligand>
</feature>
<feature type="binding site" evidence="1">
    <location>
        <position position="27"/>
    </location>
    <ligand>
        <name>Zn(2+)</name>
        <dbReference type="ChEBI" id="CHEBI:29105"/>
        <label>2</label>
    </ligand>
</feature>
<feature type="binding site" evidence="1">
    <location>
        <position position="30"/>
    </location>
    <ligand>
        <name>Zn(2+)</name>
        <dbReference type="ChEBI" id="CHEBI:29105"/>
        <label>2</label>
    </ligand>
</feature>
<feature type="binding site" evidence="1">
    <location>
        <position position="33"/>
    </location>
    <ligand>
        <name>Zn(2+)</name>
        <dbReference type="ChEBI" id="CHEBI:29105"/>
        <label>1</label>
    </ligand>
</feature>
<feature type="binding site" evidence="1">
    <location>
        <position position="34"/>
    </location>
    <ligand>
        <name>Zn(2+)</name>
        <dbReference type="ChEBI" id="CHEBI:29105"/>
        <label>1</label>
    </ligand>
</feature>
<feature type="binding site" evidence="1">
    <location>
        <position position="37"/>
    </location>
    <ligand>
        <name>Zn(2+)</name>
        <dbReference type="ChEBI" id="CHEBI:29105"/>
        <label>1</label>
    </ligand>
</feature>
<feature type="site" description="Essential for Tat translocation through the endosomal membrane" evidence="1">
    <location>
        <position position="11"/>
    </location>
</feature>
<feature type="modified residue" description="N6-acetyllysine; by host PCAF" evidence="1">
    <location>
        <position position="28"/>
    </location>
</feature>
<feature type="modified residue" description="N6-acetyllysine; by host EP300 and GCN5L2" evidence="1">
    <location>
        <position position="50"/>
    </location>
</feature>
<feature type="modified residue" description="N6-acetyllysine; by host EP300 and GCN5L2" evidence="1">
    <location>
        <position position="51"/>
    </location>
</feature>
<feature type="modified residue" description="Asymmetric dimethylarginine; by host PRMT6" evidence="1">
    <location>
        <position position="52"/>
    </location>
</feature>
<feature type="modified residue" description="Asymmetric dimethylarginine; by host PRMT6" evidence="1">
    <location>
        <position position="53"/>
    </location>
</feature>
<feature type="cross-link" description="Glycyl lysine isopeptide (Lys-Gly) (interchain with G-Cter in ubiquitin)" evidence="1">
    <location>
        <position position="71"/>
    </location>
</feature>
<feature type="splice variant" id="VSP_022422" description="In isoform Short.">
    <location>
        <begin position="73"/>
        <end position="102"/>
    </location>
</feature>
<protein>
    <recommendedName>
        <fullName evidence="1">Protein Tat</fullName>
    </recommendedName>
    <alternativeName>
        <fullName evidence="1">Transactivating regulatory protein</fullName>
    </alternativeName>
</protein>